<dbReference type="EMBL" id="U12518">
    <property type="protein sequence ID" value="AAA86055.1"/>
    <property type="molecule type" value="mRNA"/>
</dbReference>
<dbReference type="EMBL" id="X80998">
    <property type="protein sequence ID" value="CAA56925.1"/>
    <property type="molecule type" value="mRNA"/>
</dbReference>
<dbReference type="EMBL" id="X98221">
    <property type="protein sequence ID" value="CAA66881.1"/>
    <property type="molecule type" value="Genomic_DNA"/>
</dbReference>
<dbReference type="EMBL" id="X98222">
    <property type="protein sequence ID" value="CAA66882.1"/>
    <property type="molecule type" value="Genomic_DNA"/>
</dbReference>
<dbReference type="PIR" id="S67472">
    <property type="entry name" value="S67472"/>
</dbReference>
<dbReference type="SMR" id="P49143"/>
<dbReference type="GO" id="GO:0005615">
    <property type="term" value="C:extracellular space"/>
    <property type="evidence" value="ECO:0007669"/>
    <property type="project" value="TreeGrafter"/>
</dbReference>
<dbReference type="GO" id="GO:0005179">
    <property type="term" value="F:hormone activity"/>
    <property type="evidence" value="ECO:0007669"/>
    <property type="project" value="UniProtKB-KW"/>
</dbReference>
<dbReference type="GO" id="GO:0070324">
    <property type="term" value="F:thyroid hormone binding"/>
    <property type="evidence" value="ECO:0007669"/>
    <property type="project" value="TreeGrafter"/>
</dbReference>
<dbReference type="GO" id="GO:0006144">
    <property type="term" value="P:purine nucleobase metabolic process"/>
    <property type="evidence" value="ECO:0007669"/>
    <property type="project" value="TreeGrafter"/>
</dbReference>
<dbReference type="FunFam" id="2.60.40.180:FF:000002">
    <property type="entry name" value="Transthyretin"/>
    <property type="match status" value="1"/>
</dbReference>
<dbReference type="Gene3D" id="2.60.40.180">
    <property type="entry name" value="Transthyretin/hydroxyisourate hydrolase domain"/>
    <property type="match status" value="1"/>
</dbReference>
<dbReference type="InterPro" id="IPR023418">
    <property type="entry name" value="Thyroxine_BS"/>
</dbReference>
<dbReference type="InterPro" id="IPR000895">
    <property type="entry name" value="Transthyretin/HIU_hydrolase"/>
</dbReference>
<dbReference type="InterPro" id="IPR023416">
    <property type="entry name" value="Transthyretin/HIU_hydrolase_d"/>
</dbReference>
<dbReference type="InterPro" id="IPR036817">
    <property type="entry name" value="Transthyretin/HIU_hydrolase_sf"/>
</dbReference>
<dbReference type="InterPro" id="IPR023419">
    <property type="entry name" value="Transthyretin_CS"/>
</dbReference>
<dbReference type="PANTHER" id="PTHR10395:SF12">
    <property type="entry name" value="TRANSTHYRETIN"/>
    <property type="match status" value="1"/>
</dbReference>
<dbReference type="PANTHER" id="PTHR10395">
    <property type="entry name" value="URICASE AND TRANSTHYRETIN-RELATED"/>
    <property type="match status" value="1"/>
</dbReference>
<dbReference type="Pfam" id="PF00576">
    <property type="entry name" value="Transthyretin"/>
    <property type="match status" value="1"/>
</dbReference>
<dbReference type="PRINTS" id="PR00189">
    <property type="entry name" value="TRNSTHYRETIN"/>
</dbReference>
<dbReference type="SMART" id="SM00095">
    <property type="entry name" value="TR_THY"/>
    <property type="match status" value="1"/>
</dbReference>
<dbReference type="SUPFAM" id="SSF49472">
    <property type="entry name" value="Transthyretin (synonym: prealbumin)"/>
    <property type="match status" value="1"/>
</dbReference>
<dbReference type="PROSITE" id="PS00768">
    <property type="entry name" value="TRANSTHYRETIN_1"/>
    <property type="match status" value="1"/>
</dbReference>
<dbReference type="PROSITE" id="PS00769">
    <property type="entry name" value="TRANSTHYRETIN_2"/>
    <property type="match status" value="1"/>
</dbReference>
<accession>P49143</accession>
<accession>Q6LAP2</accession>
<accession>Q6LAP3</accession>
<evidence type="ECO:0000250" key="1"/>
<evidence type="ECO:0000250" key="2">
    <source>
        <dbReference type="UniProtKB" id="P02766"/>
    </source>
</evidence>
<evidence type="ECO:0000255" key="3"/>
<evidence type="ECO:0000269" key="4">
    <source>
    </source>
</evidence>
<evidence type="ECO:0000305" key="5"/>
<reference key="1">
    <citation type="journal article" date="1995" name="Eur. J. Biochem.">
        <title>Evolution of transthyretin in marsupials.</title>
        <authorList>
            <person name="Duan W."/>
            <person name="Richardson S.J."/>
            <person name="Babon J.J."/>
            <person name="Heyes R.J."/>
            <person name="Southwell B.R."/>
            <person name="Harms P.J."/>
            <person name="Wettenhall R.E.H."/>
            <person name="Dziegielewska K.M."/>
            <person name="Selwood L."/>
            <person name="Bradley A.J."/>
            <person name="Brack C.M."/>
            <person name="Schreiber G."/>
        </authorList>
    </citation>
    <scope>NUCLEOTIDE SEQUENCE [MRNA]</scope>
    <scope>TISSUE SPECIFICITY</scope>
    <source>
        <tissue>Choroid plexus</tissue>
    </source>
</reference>
<reference key="2">
    <citation type="journal article" date="1997" name="Eur. J. Biochem.">
        <title>Evolution of shorter and more hydrophilic transthyretin N-termini by stepwise conversion of exon 2 into intron 1 sequences (shifting the 3' splice site of intron 1).</title>
        <authorList>
            <person name="Aldred A.R."/>
            <person name="Prapunpoj P."/>
            <person name="Schreiber G."/>
        </authorList>
    </citation>
    <scope>NUCLEOTIDE SEQUENCE [GENOMIC DNA] OF 13-32</scope>
    <source>
        <tissue>Kidney</tissue>
    </source>
</reference>
<name>TTHY_SMIMA</name>
<comment type="function">
    <text evidence="1">Thyroid hormone-binding protein. Probably transports thyroxine from the bloodstream to the brain (By similarity).</text>
</comment>
<comment type="subunit">
    <text evidence="1">Homotetramer. Dimer of dimers. In the homotetramer, subunits assemble around a central channel that can accommodate two ligand molecules. Interacts with RBP4 (By similarity).</text>
</comment>
<comment type="subcellular location">
    <subcellularLocation>
        <location evidence="1">Secreted</location>
    </subcellularLocation>
</comment>
<comment type="tissue specificity">
    <text evidence="4">Highly expressed in the choroid plexus.</text>
</comment>
<comment type="PTM">
    <text evidence="2">Sulfonation of the reactive cysteine Cys-32 enhances the stability of the native conformation of TTR, avoiding misassembly of the protein leading to amyloid formation.</text>
</comment>
<comment type="similarity">
    <text evidence="5">Belongs to the transthyretin family.</text>
</comment>
<sequence>MAFHSLLLLCLAGLVFLSEAGPVAHGAEDSKCPLMVKVLDSVRGSPAVNVDVKVFKKTEEQTWELFASGKTNNNGEIHELTSDDQFGEGLYKVEFDTVSYWKTFGISPFHEYADVVFTANDAGHRHYTIAAQLSPFSFSTTAVVSNPKD</sequence>
<proteinExistence type="evidence at transcript level"/>
<keyword id="KW-0301">Gamma-carboxyglutamic acid</keyword>
<keyword id="KW-0372">Hormone</keyword>
<keyword id="KW-0964">Secreted</keyword>
<keyword id="KW-0732">Signal</keyword>
<keyword id="KW-0765">Sulfation</keyword>
<keyword id="KW-0795">Thyroid hormone</keyword>
<keyword id="KW-0813">Transport</keyword>
<organism>
    <name type="scientific">Sminthopsis macroura</name>
    <name type="common">Stripe-faced dunnart</name>
    <dbReference type="NCBI Taxonomy" id="9302"/>
    <lineage>
        <taxon>Eukaryota</taxon>
        <taxon>Metazoa</taxon>
        <taxon>Chordata</taxon>
        <taxon>Craniata</taxon>
        <taxon>Vertebrata</taxon>
        <taxon>Euteleostomi</taxon>
        <taxon>Mammalia</taxon>
        <taxon>Metatheria</taxon>
        <taxon>Dasyuromorphia</taxon>
        <taxon>Dasyuridae</taxon>
        <taxon>Sminthopsis</taxon>
    </lineage>
</organism>
<protein>
    <recommendedName>
        <fullName>Transthyretin</fullName>
    </recommendedName>
    <alternativeName>
        <fullName>Prealbumin</fullName>
    </alternativeName>
</protein>
<gene>
    <name type="primary">TTR</name>
</gene>
<feature type="signal peptide" evidence="3">
    <location>
        <begin position="1"/>
        <end position="20"/>
    </location>
</feature>
<feature type="chain" id="PRO_0000035766" description="Transthyretin">
    <location>
        <begin position="21"/>
        <end position="149"/>
    </location>
</feature>
<feature type="binding site" evidence="2">
    <location>
        <position position="37"/>
    </location>
    <ligand>
        <name>L-thyroxine</name>
        <dbReference type="ChEBI" id="CHEBI:58448"/>
    </ligand>
</feature>
<feature type="binding site" evidence="2">
    <location>
        <position position="76"/>
    </location>
    <ligand>
        <name>L-thyroxine</name>
        <dbReference type="ChEBI" id="CHEBI:58448"/>
    </ligand>
</feature>
<feature type="binding site" evidence="2">
    <location>
        <position position="139"/>
    </location>
    <ligand>
        <name>L-thyroxine</name>
        <dbReference type="ChEBI" id="CHEBI:58448"/>
    </ligand>
</feature>
<feature type="modified residue" description="Sulfocysteine" evidence="2">
    <location>
        <position position="32"/>
    </location>
</feature>
<feature type="modified residue" description="4-carboxyglutamate" evidence="2">
    <location>
        <position position="64"/>
    </location>
</feature>